<gene>
    <name evidence="2" type="primary">tal</name>
    <name type="ordered locus">CGSHiGG_09285</name>
</gene>
<sequence>MTTQLDSLRNMTVVVADTGDIDAIKKYQPQDATTNPSLILSASALPQYAPLIDEAIAYAKAQSANKAQQLIDAEDKLAVNIGLEILKIVPGRISTEVDARLSYDTQATVEKARKLIALYNAAGISNDRILIKIASTWQGIRAAEILEKEGINCNLTLLFSEAQARACAEAGVYLISPFVGRILDWYKANSDKKEYAPAEDPGVISVTKIYNYYKEYGYNTVVMGASFRNVGEITELAGCDRLTIAPALLKELQENSTALVRKLEYKGEVKAKPQPLTEAEFYWQHNSDAMAVEKLAEGIRKFAVDQEKLETMLSAKL</sequence>
<dbReference type="EC" id="2.2.1.2" evidence="2"/>
<dbReference type="EMBL" id="CP000672">
    <property type="protein sequence ID" value="ABR00655.1"/>
    <property type="molecule type" value="Genomic_DNA"/>
</dbReference>
<dbReference type="SMR" id="A5UIP9"/>
<dbReference type="KEGG" id="hiq:CGSHiGG_09285"/>
<dbReference type="HOGENOM" id="CLU_047470_0_1_6"/>
<dbReference type="UniPathway" id="UPA00115">
    <property type="reaction ID" value="UER00414"/>
</dbReference>
<dbReference type="Proteomes" id="UP000001990">
    <property type="component" value="Chromosome"/>
</dbReference>
<dbReference type="GO" id="GO:0005829">
    <property type="term" value="C:cytosol"/>
    <property type="evidence" value="ECO:0007669"/>
    <property type="project" value="TreeGrafter"/>
</dbReference>
<dbReference type="GO" id="GO:0004801">
    <property type="term" value="F:transaldolase activity"/>
    <property type="evidence" value="ECO:0000250"/>
    <property type="project" value="UniProtKB"/>
</dbReference>
<dbReference type="GO" id="GO:0005975">
    <property type="term" value="P:carbohydrate metabolic process"/>
    <property type="evidence" value="ECO:0007669"/>
    <property type="project" value="InterPro"/>
</dbReference>
<dbReference type="GO" id="GO:0006098">
    <property type="term" value="P:pentose-phosphate shunt"/>
    <property type="evidence" value="ECO:0007669"/>
    <property type="project" value="UniProtKB-UniRule"/>
</dbReference>
<dbReference type="CDD" id="cd00957">
    <property type="entry name" value="Transaldolase_TalAB"/>
    <property type="match status" value="1"/>
</dbReference>
<dbReference type="FunFam" id="3.20.20.70:FF:000002">
    <property type="entry name" value="Transaldolase"/>
    <property type="match status" value="1"/>
</dbReference>
<dbReference type="Gene3D" id="3.20.20.70">
    <property type="entry name" value="Aldolase class I"/>
    <property type="match status" value="1"/>
</dbReference>
<dbReference type="HAMAP" id="MF_00492">
    <property type="entry name" value="Transaldolase_1"/>
    <property type="match status" value="1"/>
</dbReference>
<dbReference type="InterPro" id="IPR013785">
    <property type="entry name" value="Aldolase_TIM"/>
</dbReference>
<dbReference type="InterPro" id="IPR001585">
    <property type="entry name" value="TAL/FSA"/>
</dbReference>
<dbReference type="InterPro" id="IPR004730">
    <property type="entry name" value="Transaldolase_1"/>
</dbReference>
<dbReference type="InterPro" id="IPR018225">
    <property type="entry name" value="Transaldolase_AS"/>
</dbReference>
<dbReference type="NCBIfam" id="NF009001">
    <property type="entry name" value="PRK12346.1"/>
    <property type="match status" value="1"/>
</dbReference>
<dbReference type="NCBIfam" id="TIGR00874">
    <property type="entry name" value="talAB"/>
    <property type="match status" value="1"/>
</dbReference>
<dbReference type="PANTHER" id="PTHR10683">
    <property type="entry name" value="TRANSALDOLASE"/>
    <property type="match status" value="1"/>
</dbReference>
<dbReference type="PANTHER" id="PTHR10683:SF18">
    <property type="entry name" value="TRANSALDOLASE"/>
    <property type="match status" value="1"/>
</dbReference>
<dbReference type="Pfam" id="PF00923">
    <property type="entry name" value="TAL_FSA"/>
    <property type="match status" value="1"/>
</dbReference>
<dbReference type="SUPFAM" id="SSF51569">
    <property type="entry name" value="Aldolase"/>
    <property type="match status" value="1"/>
</dbReference>
<dbReference type="PROSITE" id="PS01054">
    <property type="entry name" value="TRANSALDOLASE_1"/>
    <property type="match status" value="1"/>
</dbReference>
<dbReference type="PROSITE" id="PS00958">
    <property type="entry name" value="TRANSALDOLASE_2"/>
    <property type="match status" value="1"/>
</dbReference>
<accession>A5UIP9</accession>
<reference key="1">
    <citation type="journal article" date="2007" name="Genome Biol.">
        <title>Characterization and modeling of the Haemophilus influenzae core and supragenomes based on the complete genomic sequences of Rd and 12 clinical nontypeable strains.</title>
        <authorList>
            <person name="Hogg J.S."/>
            <person name="Hu F.Z."/>
            <person name="Janto B."/>
            <person name="Boissy R."/>
            <person name="Hayes J."/>
            <person name="Keefe R."/>
            <person name="Post J.C."/>
            <person name="Ehrlich G.D."/>
        </authorList>
    </citation>
    <scope>NUCLEOTIDE SEQUENCE [LARGE SCALE GENOMIC DNA]</scope>
    <source>
        <strain>PittGG</strain>
    </source>
</reference>
<proteinExistence type="inferred from homology"/>
<organism>
    <name type="scientific">Haemophilus influenzae (strain PittGG)</name>
    <dbReference type="NCBI Taxonomy" id="374931"/>
    <lineage>
        <taxon>Bacteria</taxon>
        <taxon>Pseudomonadati</taxon>
        <taxon>Pseudomonadota</taxon>
        <taxon>Gammaproteobacteria</taxon>
        <taxon>Pasteurellales</taxon>
        <taxon>Pasteurellaceae</taxon>
        <taxon>Haemophilus</taxon>
    </lineage>
</organism>
<comment type="function">
    <text evidence="2">Transaldolase is important for the balance of metabolites in the pentose-phosphate pathway.</text>
</comment>
<comment type="catalytic activity">
    <reaction evidence="2">
        <text>D-sedoheptulose 7-phosphate + D-glyceraldehyde 3-phosphate = D-erythrose 4-phosphate + beta-D-fructose 6-phosphate</text>
        <dbReference type="Rhea" id="RHEA:17053"/>
        <dbReference type="ChEBI" id="CHEBI:16897"/>
        <dbReference type="ChEBI" id="CHEBI:57483"/>
        <dbReference type="ChEBI" id="CHEBI:57634"/>
        <dbReference type="ChEBI" id="CHEBI:59776"/>
        <dbReference type="EC" id="2.2.1.2"/>
    </reaction>
</comment>
<comment type="pathway">
    <text evidence="2">Carbohydrate degradation; pentose phosphate pathway; D-glyceraldehyde 3-phosphate and beta-D-fructose 6-phosphate from D-ribose 5-phosphate and D-xylulose 5-phosphate (non-oxidative stage): step 2/3.</text>
</comment>
<comment type="subunit">
    <text evidence="1">Homodimer.</text>
</comment>
<comment type="subcellular location">
    <subcellularLocation>
        <location evidence="2">Cytoplasm</location>
    </subcellularLocation>
</comment>
<comment type="similarity">
    <text evidence="2">Belongs to the transaldolase family. Type 1 subfamily.</text>
</comment>
<name>TAL_HAEIG</name>
<evidence type="ECO:0000250" key="1"/>
<evidence type="ECO:0000255" key="2">
    <source>
        <dbReference type="HAMAP-Rule" id="MF_00492"/>
    </source>
</evidence>
<keyword id="KW-0963">Cytoplasm</keyword>
<keyword id="KW-0570">Pentose shunt</keyword>
<keyword id="KW-0704">Schiff base</keyword>
<keyword id="KW-0808">Transferase</keyword>
<protein>
    <recommendedName>
        <fullName evidence="2">Transaldolase</fullName>
        <ecNumber evidence="2">2.2.1.2</ecNumber>
    </recommendedName>
</protein>
<feature type="chain" id="PRO_1000014500" description="Transaldolase">
    <location>
        <begin position="1"/>
        <end position="317"/>
    </location>
</feature>
<feature type="active site" description="Schiff-base intermediate with substrate" evidence="2">
    <location>
        <position position="132"/>
    </location>
</feature>